<name>PGK_STRS7</name>
<keyword id="KW-0067">ATP-binding</keyword>
<keyword id="KW-0963">Cytoplasm</keyword>
<keyword id="KW-0324">Glycolysis</keyword>
<keyword id="KW-0418">Kinase</keyword>
<keyword id="KW-0547">Nucleotide-binding</keyword>
<keyword id="KW-0808">Transferase</keyword>
<sequence length="398" mass="42210">MAKLTVKDLDLKGKKVLVRVDFNVPLKNGVITNDNRISAALPTIKYIIEHGGRAILFSHLGRVKEEADKEGKSLAPVAKNLAEKLGQEVIFPGSTRGAELEAAIDALEDGQVLLVENTRFEDIDGKKESKNDPELGKYWASLGEGIFVNDAFGTAHRAHASNVGISANVEKAVAGFLLENEIAYIKEAVEAPERPFVAILGGSKVSDKIGVIENLLEKADKVLIGGGMTYTFYKAQGIEIGNSLCEEDKLDVAKSLLEKSNGKLILPVDSKEANAFADYTEVKVTEGEAVDAGFLGLDIGPKSIAKFDEALTGAKTVVWNGPMGVFENPDFQEGTIGVMDAIVKQPGVKSIIGGGDSAAAAINLGRADKFSWISTGGGASMELLEGKELPGLAALTEK</sequence>
<organism>
    <name type="scientific">Streptococcus equi subsp. zooepidemicus (strain H70)</name>
    <dbReference type="NCBI Taxonomy" id="553483"/>
    <lineage>
        <taxon>Bacteria</taxon>
        <taxon>Bacillati</taxon>
        <taxon>Bacillota</taxon>
        <taxon>Bacilli</taxon>
        <taxon>Lactobacillales</taxon>
        <taxon>Streptococcaceae</taxon>
        <taxon>Streptococcus</taxon>
    </lineage>
</organism>
<evidence type="ECO:0000255" key="1">
    <source>
        <dbReference type="HAMAP-Rule" id="MF_00145"/>
    </source>
</evidence>
<gene>
    <name evidence="1" type="primary">pgk</name>
    <name type="ordered locus">SZO_16860</name>
</gene>
<feature type="chain" id="PRO_1000203349" description="Phosphoglycerate kinase">
    <location>
        <begin position="1"/>
        <end position="398"/>
    </location>
</feature>
<feature type="binding site" evidence="1">
    <location>
        <begin position="21"/>
        <end position="23"/>
    </location>
    <ligand>
        <name>substrate</name>
    </ligand>
</feature>
<feature type="binding site" evidence="1">
    <location>
        <position position="36"/>
    </location>
    <ligand>
        <name>substrate</name>
    </ligand>
</feature>
<feature type="binding site" evidence="1">
    <location>
        <begin position="59"/>
        <end position="62"/>
    </location>
    <ligand>
        <name>substrate</name>
    </ligand>
</feature>
<feature type="binding site" evidence="1">
    <location>
        <position position="119"/>
    </location>
    <ligand>
        <name>substrate</name>
    </ligand>
</feature>
<feature type="binding site" evidence="1">
    <location>
        <position position="157"/>
    </location>
    <ligand>
        <name>substrate</name>
    </ligand>
</feature>
<feature type="binding site" evidence="1">
    <location>
        <position position="208"/>
    </location>
    <ligand>
        <name>ATP</name>
        <dbReference type="ChEBI" id="CHEBI:30616"/>
    </ligand>
</feature>
<feature type="binding site" evidence="1">
    <location>
        <position position="296"/>
    </location>
    <ligand>
        <name>ATP</name>
        <dbReference type="ChEBI" id="CHEBI:30616"/>
    </ligand>
</feature>
<feature type="binding site" evidence="1">
    <location>
        <position position="327"/>
    </location>
    <ligand>
        <name>ATP</name>
        <dbReference type="ChEBI" id="CHEBI:30616"/>
    </ligand>
</feature>
<feature type="binding site" evidence="1">
    <location>
        <begin position="354"/>
        <end position="357"/>
    </location>
    <ligand>
        <name>ATP</name>
        <dbReference type="ChEBI" id="CHEBI:30616"/>
    </ligand>
</feature>
<accession>C0MF22</accession>
<proteinExistence type="inferred from homology"/>
<dbReference type="EC" id="2.7.2.3" evidence="1"/>
<dbReference type="EMBL" id="FM204884">
    <property type="protein sequence ID" value="CAX00469.1"/>
    <property type="molecule type" value="Genomic_DNA"/>
</dbReference>
<dbReference type="SMR" id="C0MF22"/>
<dbReference type="KEGG" id="seq:SZO_16860"/>
<dbReference type="eggNOG" id="COG0126">
    <property type="taxonomic scope" value="Bacteria"/>
</dbReference>
<dbReference type="HOGENOM" id="CLU_025427_0_1_9"/>
<dbReference type="UniPathway" id="UPA00109">
    <property type="reaction ID" value="UER00185"/>
</dbReference>
<dbReference type="Proteomes" id="UP000001368">
    <property type="component" value="Chromosome"/>
</dbReference>
<dbReference type="GO" id="GO:0005829">
    <property type="term" value="C:cytosol"/>
    <property type="evidence" value="ECO:0007669"/>
    <property type="project" value="TreeGrafter"/>
</dbReference>
<dbReference type="GO" id="GO:0043531">
    <property type="term" value="F:ADP binding"/>
    <property type="evidence" value="ECO:0007669"/>
    <property type="project" value="TreeGrafter"/>
</dbReference>
<dbReference type="GO" id="GO:0005524">
    <property type="term" value="F:ATP binding"/>
    <property type="evidence" value="ECO:0007669"/>
    <property type="project" value="UniProtKB-KW"/>
</dbReference>
<dbReference type="GO" id="GO:0004618">
    <property type="term" value="F:phosphoglycerate kinase activity"/>
    <property type="evidence" value="ECO:0007669"/>
    <property type="project" value="UniProtKB-UniRule"/>
</dbReference>
<dbReference type="GO" id="GO:0006094">
    <property type="term" value="P:gluconeogenesis"/>
    <property type="evidence" value="ECO:0007669"/>
    <property type="project" value="TreeGrafter"/>
</dbReference>
<dbReference type="GO" id="GO:0006096">
    <property type="term" value="P:glycolytic process"/>
    <property type="evidence" value="ECO:0007669"/>
    <property type="project" value="UniProtKB-UniRule"/>
</dbReference>
<dbReference type="FunFam" id="3.40.50.1260:FF:000001">
    <property type="entry name" value="Phosphoglycerate kinase"/>
    <property type="match status" value="1"/>
</dbReference>
<dbReference type="FunFam" id="3.40.50.1260:FF:000008">
    <property type="entry name" value="Phosphoglycerate kinase"/>
    <property type="match status" value="1"/>
</dbReference>
<dbReference type="Gene3D" id="3.40.50.1260">
    <property type="entry name" value="Phosphoglycerate kinase, N-terminal domain"/>
    <property type="match status" value="2"/>
</dbReference>
<dbReference type="HAMAP" id="MF_00145">
    <property type="entry name" value="Phosphoglyc_kinase"/>
    <property type="match status" value="1"/>
</dbReference>
<dbReference type="InterPro" id="IPR001576">
    <property type="entry name" value="Phosphoglycerate_kinase"/>
</dbReference>
<dbReference type="InterPro" id="IPR015911">
    <property type="entry name" value="Phosphoglycerate_kinase_CS"/>
</dbReference>
<dbReference type="InterPro" id="IPR015824">
    <property type="entry name" value="Phosphoglycerate_kinase_N"/>
</dbReference>
<dbReference type="InterPro" id="IPR036043">
    <property type="entry name" value="Phosphoglycerate_kinase_sf"/>
</dbReference>
<dbReference type="PANTHER" id="PTHR11406">
    <property type="entry name" value="PHOSPHOGLYCERATE KINASE"/>
    <property type="match status" value="1"/>
</dbReference>
<dbReference type="PANTHER" id="PTHR11406:SF23">
    <property type="entry name" value="PHOSPHOGLYCERATE KINASE 1, CHLOROPLASTIC-RELATED"/>
    <property type="match status" value="1"/>
</dbReference>
<dbReference type="Pfam" id="PF00162">
    <property type="entry name" value="PGK"/>
    <property type="match status" value="1"/>
</dbReference>
<dbReference type="PIRSF" id="PIRSF000724">
    <property type="entry name" value="Pgk"/>
    <property type="match status" value="1"/>
</dbReference>
<dbReference type="PRINTS" id="PR00477">
    <property type="entry name" value="PHGLYCKINASE"/>
</dbReference>
<dbReference type="SUPFAM" id="SSF53748">
    <property type="entry name" value="Phosphoglycerate kinase"/>
    <property type="match status" value="1"/>
</dbReference>
<dbReference type="PROSITE" id="PS00111">
    <property type="entry name" value="PGLYCERATE_KINASE"/>
    <property type="match status" value="1"/>
</dbReference>
<reference key="1">
    <citation type="journal article" date="2009" name="PLoS Pathog.">
        <title>Genomic evidence for the evolution of Streptococcus equi: host restriction, increased virulence, and genetic exchange with human pathogens.</title>
        <authorList>
            <person name="Holden M.T.G."/>
            <person name="Heather Z."/>
            <person name="Paillot R."/>
            <person name="Steward K.F."/>
            <person name="Webb K."/>
            <person name="Ainslie F."/>
            <person name="Jourdan T."/>
            <person name="Bason N.C."/>
            <person name="Holroyd N.E."/>
            <person name="Mungall K."/>
            <person name="Quail M.A."/>
            <person name="Sanders M."/>
            <person name="Simmonds M."/>
            <person name="Willey D."/>
            <person name="Brooks K."/>
            <person name="Aanensen D.M."/>
            <person name="Spratt B.G."/>
            <person name="Jolley K.A."/>
            <person name="Maiden M.C.J."/>
            <person name="Kehoe M."/>
            <person name="Chanter N."/>
            <person name="Bentley S.D."/>
            <person name="Robinson C."/>
            <person name="Maskell D.J."/>
            <person name="Parkhill J."/>
            <person name="Waller A.S."/>
        </authorList>
    </citation>
    <scope>NUCLEOTIDE SEQUENCE [LARGE SCALE GENOMIC DNA]</scope>
    <source>
        <strain>H70</strain>
    </source>
</reference>
<comment type="catalytic activity">
    <reaction evidence="1">
        <text>(2R)-3-phosphoglycerate + ATP = (2R)-3-phospho-glyceroyl phosphate + ADP</text>
        <dbReference type="Rhea" id="RHEA:14801"/>
        <dbReference type="ChEBI" id="CHEBI:30616"/>
        <dbReference type="ChEBI" id="CHEBI:57604"/>
        <dbReference type="ChEBI" id="CHEBI:58272"/>
        <dbReference type="ChEBI" id="CHEBI:456216"/>
        <dbReference type="EC" id="2.7.2.3"/>
    </reaction>
</comment>
<comment type="pathway">
    <text evidence="1">Carbohydrate degradation; glycolysis; pyruvate from D-glyceraldehyde 3-phosphate: step 2/5.</text>
</comment>
<comment type="subunit">
    <text evidence="1">Monomer.</text>
</comment>
<comment type="subcellular location">
    <subcellularLocation>
        <location evidence="1">Cytoplasm</location>
    </subcellularLocation>
</comment>
<comment type="similarity">
    <text evidence="1">Belongs to the phosphoglycerate kinase family.</text>
</comment>
<protein>
    <recommendedName>
        <fullName evidence="1">Phosphoglycerate kinase</fullName>
        <ecNumber evidence="1">2.7.2.3</ecNumber>
    </recommendedName>
</protein>